<comment type="function">
    <text>Subtilisin is an extracellular alkaline serine protease, it catalyzes the hydrolysis of proteins and peptide amides.</text>
</comment>
<comment type="catalytic activity">
    <reaction>
        <text>Hydrolysis of proteins with broad specificity for peptide bonds, and a preference for a large uncharged residue in P1. Hydrolyzes peptide amides.</text>
        <dbReference type="EC" id="3.4.21.62"/>
    </reaction>
</comment>
<comment type="cofactor">
    <cofactor>
        <name>Ca(2+)</name>
        <dbReference type="ChEBI" id="CHEBI:29108"/>
    </cofactor>
    <text>Binds 2 calcium ions per subunit.</text>
</comment>
<comment type="subcellular location">
    <subcellularLocation>
        <location>Secreted</location>
    </subcellularLocation>
</comment>
<comment type="miscellaneous">
    <text>Secretion of subtilisin is associated with onset of sporulation, and many mutations which block sporulation at early stages affect expression levels of subtilisin. However, subtilisin is not necessary for normal sporulation.</text>
</comment>
<comment type="similarity">
    <text evidence="2">Belongs to the peptidase S8 family.</text>
</comment>
<dbReference type="EC" id="3.4.21.62"/>
<dbReference type="PDB" id="1BH6">
    <property type="method" value="X-ray"/>
    <property type="resolution" value="1.75 A"/>
    <property type="chains" value="A=1-274"/>
</dbReference>
<dbReference type="PDBsum" id="1BH6"/>
<dbReference type="SMR" id="P00781"/>
<dbReference type="DrugBank" id="DB06886">
    <property type="generic name" value="N-BENZYLOXYCARBONYL-ALA-PRO-3-AMINO-4-PHENYL-BUTAN-2-OL"/>
</dbReference>
<dbReference type="MEROPS" id="S08.037"/>
<dbReference type="EvolutionaryTrace" id="P00781"/>
<dbReference type="GO" id="GO:0005576">
    <property type="term" value="C:extracellular region"/>
    <property type="evidence" value="ECO:0007669"/>
    <property type="project" value="UniProtKB-SubCell"/>
</dbReference>
<dbReference type="GO" id="GO:0046872">
    <property type="term" value="F:metal ion binding"/>
    <property type="evidence" value="ECO:0007669"/>
    <property type="project" value="UniProtKB-KW"/>
</dbReference>
<dbReference type="GO" id="GO:0004252">
    <property type="term" value="F:serine-type endopeptidase activity"/>
    <property type="evidence" value="ECO:0007669"/>
    <property type="project" value="UniProtKB-EC"/>
</dbReference>
<dbReference type="GO" id="GO:0006508">
    <property type="term" value="P:proteolysis"/>
    <property type="evidence" value="ECO:0007669"/>
    <property type="project" value="UniProtKB-KW"/>
</dbReference>
<dbReference type="GO" id="GO:0030435">
    <property type="term" value="P:sporulation resulting in formation of a cellular spore"/>
    <property type="evidence" value="ECO:0007669"/>
    <property type="project" value="UniProtKB-KW"/>
</dbReference>
<dbReference type="CDD" id="cd07477">
    <property type="entry name" value="Peptidases_S8_Subtilisin_subset"/>
    <property type="match status" value="1"/>
</dbReference>
<dbReference type="Gene3D" id="3.40.50.200">
    <property type="entry name" value="Peptidase S8/S53 domain"/>
    <property type="match status" value="1"/>
</dbReference>
<dbReference type="InterPro" id="IPR000209">
    <property type="entry name" value="Peptidase_S8/S53_dom"/>
</dbReference>
<dbReference type="InterPro" id="IPR036852">
    <property type="entry name" value="Peptidase_S8/S53_dom_sf"/>
</dbReference>
<dbReference type="InterPro" id="IPR023827">
    <property type="entry name" value="Peptidase_S8_Asp-AS"/>
</dbReference>
<dbReference type="InterPro" id="IPR022398">
    <property type="entry name" value="Peptidase_S8_His-AS"/>
</dbReference>
<dbReference type="InterPro" id="IPR023828">
    <property type="entry name" value="Peptidase_S8_Ser-AS"/>
</dbReference>
<dbReference type="InterPro" id="IPR050131">
    <property type="entry name" value="Peptidase_S8_subtilisin-like"/>
</dbReference>
<dbReference type="InterPro" id="IPR015500">
    <property type="entry name" value="Peptidase_S8_subtilisin-rel"/>
</dbReference>
<dbReference type="InterPro" id="IPR034202">
    <property type="entry name" value="Subtilisin_Carlsberg-like"/>
</dbReference>
<dbReference type="PANTHER" id="PTHR43806:SF11">
    <property type="entry name" value="CEREVISIN-RELATED"/>
    <property type="match status" value="1"/>
</dbReference>
<dbReference type="PANTHER" id="PTHR43806">
    <property type="entry name" value="PEPTIDASE S8"/>
    <property type="match status" value="1"/>
</dbReference>
<dbReference type="Pfam" id="PF00082">
    <property type="entry name" value="Peptidase_S8"/>
    <property type="match status" value="1"/>
</dbReference>
<dbReference type="PRINTS" id="PR00723">
    <property type="entry name" value="SUBTILISIN"/>
</dbReference>
<dbReference type="SUPFAM" id="SSF52743">
    <property type="entry name" value="Subtilisin-like"/>
    <property type="match status" value="1"/>
</dbReference>
<dbReference type="PROSITE" id="PS51892">
    <property type="entry name" value="SUBTILASE"/>
    <property type="match status" value="1"/>
</dbReference>
<dbReference type="PROSITE" id="PS00136">
    <property type="entry name" value="SUBTILASE_ASP"/>
    <property type="match status" value="1"/>
</dbReference>
<dbReference type="PROSITE" id="PS00137">
    <property type="entry name" value="SUBTILASE_HIS"/>
    <property type="match status" value="1"/>
</dbReference>
<dbReference type="PROSITE" id="PS00138">
    <property type="entry name" value="SUBTILASE_SER"/>
    <property type="match status" value="1"/>
</dbReference>
<reference key="1">
    <citation type="journal article" date="1983" name="Hoppe-Seyler's Z. Physiol. Chem.">
        <title>Primary structure of subtilisin DY.</title>
        <authorList>
            <person name="Nedkov P."/>
            <person name="Oberthur W."/>
            <person name="Braunitzer G."/>
        </authorList>
    </citation>
    <scope>PROTEIN SEQUENCE</scope>
    <source>
        <strain>DY</strain>
    </source>
</reference>
<reference key="2">
    <citation type="journal article" date="1998" name="Eur. J. Biochem.">
        <title>Crystal structure of subtilisin DY, a random mutant of subtilisin Carlsberg.</title>
        <authorList>
            <person name="Eschenburg S."/>
            <person name="Genov N."/>
            <person name="Peters K."/>
            <person name="Fittkau S."/>
            <person name="Stoeva S."/>
            <person name="Wilson K.S."/>
            <person name="Betzel C."/>
        </authorList>
    </citation>
    <scope>X-RAY CRYSTALLOGRAPHY (1.75 ANGSTROMS)</scope>
    <source>
        <strain>DY</strain>
    </source>
</reference>
<protein>
    <recommendedName>
        <fullName>Subtilisin DY</fullName>
        <ecNumber>3.4.21.62</ecNumber>
    </recommendedName>
</protein>
<gene>
    <name type="primary">apr</name>
</gene>
<sequence>AQTVPYGIPLIKADKVQAQGYKGANVKVGIIDTGIAASHTDLKVVGGASFVSGESYNTDGNGHGTHVAGTVAALDNTTGVLGVAPNVSLYAIKVLNSSGSGTYSAIVSGIEWATQNGLDVINMSLGGPSGSTALKQAVDKAYASGIVVVAAAGNSGSSGSQNTIGYPAKYDSVIAVGAVDSNKNRASFSSVGAELEVMAPGVSVYSTYPSNTYTSLNGTSMASPHVAGAAALILSKYPTLSASQVRNRLSSTATNLGDSFYYGKGLINVEAAAQ</sequence>
<accession>P00781</accession>
<keyword id="KW-0002">3D-structure</keyword>
<keyword id="KW-0106">Calcium</keyword>
<keyword id="KW-0903">Direct protein sequencing</keyword>
<keyword id="KW-0378">Hydrolase</keyword>
<keyword id="KW-0479">Metal-binding</keyword>
<keyword id="KW-0645">Protease</keyword>
<keyword id="KW-0964">Secreted</keyword>
<keyword id="KW-0720">Serine protease</keyword>
<keyword id="KW-0749">Sporulation</keyword>
<evidence type="ECO:0000255" key="1">
    <source>
        <dbReference type="PROSITE-ProRule" id="PRU01240"/>
    </source>
</evidence>
<evidence type="ECO:0000305" key="2"/>
<evidence type="ECO:0007829" key="3">
    <source>
        <dbReference type="PDB" id="1BH6"/>
    </source>
</evidence>
<feature type="chain" id="PRO_0000076417" description="Subtilisin DY">
    <location>
        <begin position="1"/>
        <end position="274"/>
    </location>
</feature>
<feature type="domain" description="Peptidase S8" evidence="1">
    <location>
        <begin position="5"/>
        <end position="273"/>
    </location>
</feature>
<feature type="active site" description="Charge relay system" evidence="1">
    <location>
        <position position="32"/>
    </location>
</feature>
<feature type="active site" description="Charge relay system" evidence="1">
    <location>
        <position position="63"/>
    </location>
</feature>
<feature type="active site" description="Charge relay system" evidence="1">
    <location>
        <position position="220"/>
    </location>
</feature>
<feature type="binding site">
    <location>
        <position position="2"/>
    </location>
    <ligand>
        <name>Ca(2+)</name>
        <dbReference type="ChEBI" id="CHEBI:29108"/>
        <label>1</label>
    </ligand>
</feature>
<feature type="binding site">
    <location>
        <position position="41"/>
    </location>
    <ligand>
        <name>Ca(2+)</name>
        <dbReference type="ChEBI" id="CHEBI:29108"/>
        <label>1</label>
    </ligand>
</feature>
<feature type="binding site">
    <location>
        <position position="74"/>
    </location>
    <ligand>
        <name>Ca(2+)</name>
        <dbReference type="ChEBI" id="CHEBI:29108"/>
        <label>1</label>
    </ligand>
</feature>
<feature type="binding site">
    <location>
        <position position="76"/>
    </location>
    <ligand>
        <name>Ca(2+)</name>
        <dbReference type="ChEBI" id="CHEBI:29108"/>
        <label>1</label>
    </ligand>
</feature>
<feature type="binding site">
    <location>
        <position position="80"/>
    </location>
    <ligand>
        <name>Ca(2+)</name>
        <dbReference type="ChEBI" id="CHEBI:29108"/>
        <label>1</label>
    </ligand>
</feature>
<feature type="binding site">
    <location>
        <position position="168"/>
    </location>
    <ligand>
        <name>Ca(2+)</name>
        <dbReference type="ChEBI" id="CHEBI:29108"/>
        <label>2</label>
    </ligand>
</feature>
<feature type="binding site">
    <location>
        <position position="170"/>
    </location>
    <ligand>
        <name>Ca(2+)</name>
        <dbReference type="ChEBI" id="CHEBI:29108"/>
        <label>2</label>
    </ligand>
</feature>
<feature type="binding site">
    <location>
        <position position="173"/>
    </location>
    <ligand>
        <name>Ca(2+)</name>
        <dbReference type="ChEBI" id="CHEBI:29108"/>
        <label>2</label>
    </ligand>
</feature>
<feature type="helix" evidence="3">
    <location>
        <begin position="7"/>
        <end position="10"/>
    </location>
</feature>
<feature type="helix" evidence="3">
    <location>
        <begin position="13"/>
        <end position="18"/>
    </location>
</feature>
<feature type="strand" evidence="3">
    <location>
        <begin position="27"/>
        <end position="33"/>
    </location>
</feature>
<feature type="strand" evidence="3">
    <location>
        <begin position="44"/>
        <end position="49"/>
    </location>
</feature>
<feature type="strand" evidence="3">
    <location>
        <begin position="60"/>
        <end position="62"/>
    </location>
</feature>
<feature type="helix" evidence="3">
    <location>
        <begin position="63"/>
        <end position="72"/>
    </location>
</feature>
<feature type="strand" evidence="3">
    <location>
        <begin position="75"/>
        <end position="79"/>
    </location>
</feature>
<feature type="strand" evidence="3">
    <location>
        <begin position="87"/>
        <end position="93"/>
    </location>
</feature>
<feature type="helix" evidence="3">
    <location>
        <begin position="103"/>
        <end position="115"/>
    </location>
</feature>
<feature type="strand" evidence="3">
    <location>
        <begin position="119"/>
        <end position="123"/>
    </location>
</feature>
<feature type="helix" evidence="3">
    <location>
        <begin position="132"/>
        <end position="143"/>
    </location>
</feature>
<feature type="strand" evidence="3">
    <location>
        <begin position="147"/>
        <end position="151"/>
    </location>
</feature>
<feature type="turn" evidence="3">
    <location>
        <begin position="167"/>
        <end position="169"/>
    </location>
</feature>
<feature type="strand" evidence="3">
    <location>
        <begin position="173"/>
        <end position="179"/>
    </location>
</feature>
<feature type="strand" evidence="3">
    <location>
        <begin position="195"/>
        <end position="200"/>
    </location>
</feature>
<feature type="strand" evidence="3">
    <location>
        <begin position="202"/>
        <end position="208"/>
    </location>
</feature>
<feature type="turn" evidence="3">
    <location>
        <begin position="209"/>
        <end position="211"/>
    </location>
</feature>
<feature type="strand" evidence="3">
    <location>
        <begin position="212"/>
        <end position="216"/>
    </location>
</feature>
<feature type="helix" evidence="3">
    <location>
        <begin position="219"/>
        <end position="236"/>
    </location>
</feature>
<feature type="helix" evidence="3">
    <location>
        <begin position="242"/>
        <end position="251"/>
    </location>
</feature>
<feature type="helix" evidence="3">
    <location>
        <begin position="259"/>
        <end position="262"/>
    </location>
</feature>
<feature type="helix" evidence="3">
    <location>
        <begin position="269"/>
        <end position="272"/>
    </location>
</feature>
<organism>
    <name type="scientific">Bacillus licheniformis</name>
    <dbReference type="NCBI Taxonomy" id="1402"/>
    <lineage>
        <taxon>Bacteria</taxon>
        <taxon>Bacillati</taxon>
        <taxon>Bacillota</taxon>
        <taxon>Bacilli</taxon>
        <taxon>Bacillales</taxon>
        <taxon>Bacillaceae</taxon>
        <taxon>Bacillus</taxon>
    </lineage>
</organism>
<name>SUBD_BACLI</name>
<proteinExistence type="evidence at protein level"/>